<sequence length="1063" mass="119788">MDTASVTGGEHKGKEKTCRVCGEEVAAREDGKPFVACAECGFPVCKPCYEYERSEGTQCCPQCNTRYKRHKGCPRVEGDEDDGGDMDDFEEEFQIKSPTKQKPPHEPVNFDVYSENGEQPAQKWRPGGPALSSFTGSVAGKDLEQEREMEGGMEWKDRIDKWKTKQEKRGKLNRDDSDDDDDKNDDEYMLLAEARQPLWRKVPIPSSKINPYRIVIVLRLVVLCFFLKFRITTPAMDAVPLWLASVICELWFALSWILDQLPKWSPVTRETYLDRLALRYERDGEPCRLAPIDFFVSTVDPLKEPPIITANTVLSILAVDYPVDRVSCYVSDDGASMLLFDTLSETAEFARRWVPFCKKFTIEPRAPEFYFSQKIDYLKDKVQPTFVKERRAMKREYEEFKVRINALVAKAQKKPEEGWVMQDGTPWPGNNTRDHPGMIQVYLGSQGALDVEGSELPRLVYVSREKRPGYNHHKKAGAMNSLVRVSAVLTNAPFILNLDCDHYVNNSKAVREAMCFLMDKQLGKKLCYVQFPQRFDGIDRHDRYANRNTVFFDINMKGLDGIQGPVYVGTGTVFNRQALYGYDPPRPEKRPKMTCDCWPSWCCCCCCFGGGKRGKSHKNKKGGGGGEGGGLDEPRRGLLGFYKKRSKKDKLGGGAASLAGGKKGYRKHQRGFELEEIEEGLEGYDELERSSLMSQKSFEKRFGQSPVFIASTLVEDGGLPQGAAADPAALIKEAIHVISCGYEEKTEWGKEIGWIYGSVTEDILTGFKMHCRGWKSVYCTPARAAFKGSAPINLSDRLHQVLRWALGSVEIFMSRHCPLWYAYGGRLKWLERFAYTNTIVYPFTSIPLLAYCTIPAVCLLTGKFIIPTLNNLASIWFIALFLSIIATGVLELRWSGVSIEDWWRNEQFWVIGGVSAHLFAVFQGLLKVLGGVDTNFTVTSKAAADETDAFGELYLFKWTTLLVPPTTLIIINMVGIVAGVSDAVNNGYGSWGPLFGKLFFSFWVILHLYPFLKGLMGRQNRTPTIVVLWSILLASIFSLVWVRIDPFIPKPKGPVLKPCGVSC</sequence>
<dbReference type="EC" id="2.4.1.12" evidence="8"/>
<dbReference type="EMBL" id="AC022457">
    <property type="protein sequence ID" value="AAK27814.1"/>
    <property type="molecule type" value="Genomic_DNA"/>
</dbReference>
<dbReference type="EMBL" id="DP000086">
    <property type="protein sequence ID" value="AAP54202.1"/>
    <property type="molecule type" value="Genomic_DNA"/>
</dbReference>
<dbReference type="EMBL" id="AP008216">
    <property type="protein sequence ID" value="BAF26725.1"/>
    <property type="molecule type" value="Genomic_DNA"/>
</dbReference>
<dbReference type="EMBL" id="AP014966">
    <property type="protein sequence ID" value="BAT11225.1"/>
    <property type="molecule type" value="Genomic_DNA"/>
</dbReference>
<dbReference type="EMBL" id="AK072259">
    <property type="protein sequence ID" value="BAG92896.1"/>
    <property type="molecule type" value="mRNA"/>
</dbReference>
<dbReference type="RefSeq" id="XP_015614140.1">
    <property type="nucleotide sequence ID" value="XM_015758654.1"/>
</dbReference>
<dbReference type="SMR" id="Q9AV71"/>
<dbReference type="FunCoup" id="Q9AV71">
    <property type="interactions" value="159"/>
</dbReference>
<dbReference type="STRING" id="39947.Q9AV71"/>
<dbReference type="CAZy" id="GT2">
    <property type="family name" value="Glycosyltransferase Family 2"/>
</dbReference>
<dbReference type="GlyCosmos" id="Q9AV71">
    <property type="glycosylation" value="1 site, No reported glycans"/>
</dbReference>
<dbReference type="PaxDb" id="39947-Q9AV71"/>
<dbReference type="EnsemblPlants" id="Os10t0467800-01">
    <property type="protein sequence ID" value="Os10t0467800-01"/>
    <property type="gene ID" value="Os10g0467800"/>
</dbReference>
<dbReference type="Gramene" id="Os10t0467800-01">
    <property type="protein sequence ID" value="Os10t0467800-01"/>
    <property type="gene ID" value="Os10g0467800"/>
</dbReference>
<dbReference type="KEGG" id="dosa:Os10g0467800"/>
<dbReference type="eggNOG" id="ENOG502QPUN">
    <property type="taxonomic scope" value="Eukaryota"/>
</dbReference>
<dbReference type="HOGENOM" id="CLU_001418_0_2_1"/>
<dbReference type="InParanoid" id="Q9AV71"/>
<dbReference type="OMA" id="EGSQCCP"/>
<dbReference type="OrthoDB" id="2161379at2759"/>
<dbReference type="PlantReactome" id="R-OSA-1119314">
    <property type="pathway name" value="Cellulose biosynthesis"/>
</dbReference>
<dbReference type="UniPathway" id="UPA00695"/>
<dbReference type="Proteomes" id="UP000000763">
    <property type="component" value="Chromosome 10"/>
</dbReference>
<dbReference type="Proteomes" id="UP000059680">
    <property type="component" value="Chromosome 10"/>
</dbReference>
<dbReference type="GO" id="GO:0005886">
    <property type="term" value="C:plasma membrane"/>
    <property type="evidence" value="ECO:0000318"/>
    <property type="project" value="GO_Central"/>
</dbReference>
<dbReference type="GO" id="GO:0016760">
    <property type="term" value="F:cellulose synthase (UDP-forming) activity"/>
    <property type="evidence" value="ECO:0007669"/>
    <property type="project" value="UniProtKB-EC"/>
</dbReference>
<dbReference type="GO" id="GO:0016759">
    <property type="term" value="F:cellulose synthase activity"/>
    <property type="evidence" value="ECO:0000318"/>
    <property type="project" value="GO_Central"/>
</dbReference>
<dbReference type="GO" id="GO:0008270">
    <property type="term" value="F:zinc ion binding"/>
    <property type="evidence" value="ECO:0007669"/>
    <property type="project" value="UniProtKB-KW"/>
</dbReference>
<dbReference type="GO" id="GO:0071555">
    <property type="term" value="P:cell wall organization"/>
    <property type="evidence" value="ECO:0007669"/>
    <property type="project" value="UniProtKB-KW"/>
</dbReference>
<dbReference type="GO" id="GO:0030244">
    <property type="term" value="P:cellulose biosynthetic process"/>
    <property type="evidence" value="ECO:0000315"/>
    <property type="project" value="UniProtKB"/>
</dbReference>
<dbReference type="GO" id="GO:0009833">
    <property type="term" value="P:plant-type primary cell wall biogenesis"/>
    <property type="evidence" value="ECO:0000318"/>
    <property type="project" value="GO_Central"/>
</dbReference>
<dbReference type="GO" id="GO:0009834">
    <property type="term" value="P:plant-type secondary cell wall biogenesis"/>
    <property type="evidence" value="ECO:0000315"/>
    <property type="project" value="UniProtKB"/>
</dbReference>
<dbReference type="CDD" id="cd16617">
    <property type="entry name" value="mRING-HC-C4C4_CesA"/>
    <property type="match status" value="1"/>
</dbReference>
<dbReference type="FunFam" id="3.30.40.10:FF:000558">
    <property type="entry name" value="Cellulose synthase"/>
    <property type="match status" value="1"/>
</dbReference>
<dbReference type="FunFam" id="3.90.550.10:FF:000009">
    <property type="entry name" value="Cellulose synthase"/>
    <property type="match status" value="1"/>
</dbReference>
<dbReference type="Gene3D" id="3.90.550.10">
    <property type="entry name" value="Spore Coat Polysaccharide Biosynthesis Protein SpsA, Chain A"/>
    <property type="match status" value="1"/>
</dbReference>
<dbReference type="Gene3D" id="3.30.40.10">
    <property type="entry name" value="Zinc/RING finger domain, C3HC4 (zinc finger)"/>
    <property type="match status" value="1"/>
</dbReference>
<dbReference type="InterPro" id="IPR005150">
    <property type="entry name" value="Cellulose_synth"/>
</dbReference>
<dbReference type="InterPro" id="IPR027934">
    <property type="entry name" value="CES_Znf_RING"/>
</dbReference>
<dbReference type="InterPro" id="IPR029044">
    <property type="entry name" value="Nucleotide-diphossugar_trans"/>
</dbReference>
<dbReference type="InterPro" id="IPR001841">
    <property type="entry name" value="Znf_RING"/>
</dbReference>
<dbReference type="InterPro" id="IPR013083">
    <property type="entry name" value="Znf_RING/FYVE/PHD"/>
</dbReference>
<dbReference type="PANTHER" id="PTHR13301">
    <property type="entry name" value="X-BOX TRANSCRIPTION FACTOR-RELATED"/>
    <property type="match status" value="1"/>
</dbReference>
<dbReference type="Pfam" id="PF03552">
    <property type="entry name" value="Cellulose_synt"/>
    <property type="match status" value="1"/>
</dbReference>
<dbReference type="Pfam" id="PF14569">
    <property type="entry name" value="zf-UDP"/>
    <property type="match status" value="1"/>
</dbReference>
<dbReference type="SUPFAM" id="SSF53448">
    <property type="entry name" value="Nucleotide-diphospho-sugar transferases"/>
    <property type="match status" value="1"/>
</dbReference>
<dbReference type="SUPFAM" id="SSF57850">
    <property type="entry name" value="RING/U-box"/>
    <property type="match status" value="1"/>
</dbReference>
<dbReference type="PROSITE" id="PS50089">
    <property type="entry name" value="ZF_RING_2"/>
    <property type="match status" value="1"/>
</dbReference>
<protein>
    <recommendedName>
        <fullName>Cellulose synthase A catalytic subunit 7 [UDP-forming]</fullName>
        <ecNumber evidence="8">2.4.1.12</ecNumber>
    </recommendedName>
    <alternativeName>
        <fullName>OsCesA7</fullName>
    </alternativeName>
</protein>
<evidence type="ECO:0000250" key="1">
    <source>
        <dbReference type="UniProtKB" id="Q941L0"/>
    </source>
</evidence>
<evidence type="ECO:0000250" key="2">
    <source>
        <dbReference type="UniProtKB" id="Q9SWW6"/>
    </source>
</evidence>
<evidence type="ECO:0000255" key="3"/>
<evidence type="ECO:0000255" key="4">
    <source>
        <dbReference type="PROSITE-ProRule" id="PRU00175"/>
    </source>
</evidence>
<evidence type="ECO:0000255" key="5">
    <source>
        <dbReference type="PROSITE-ProRule" id="PRU00498"/>
    </source>
</evidence>
<evidence type="ECO:0000256" key="6">
    <source>
        <dbReference type="SAM" id="MobiDB-lite"/>
    </source>
</evidence>
<evidence type="ECO:0000269" key="7">
    <source>
    </source>
</evidence>
<evidence type="ECO:0000305" key="8"/>
<reference key="1">
    <citation type="journal article" date="2003" name="Science">
        <title>In-depth view of structure, activity, and evolution of rice chromosome 10.</title>
        <authorList>
            <person name="Yu Y."/>
            <person name="Rambo T."/>
            <person name="Currie J."/>
            <person name="Saski C."/>
            <person name="Kim H.-R."/>
            <person name="Collura K."/>
            <person name="Thompson S."/>
            <person name="Simmons J."/>
            <person name="Yang T.-J."/>
            <person name="Nah G."/>
            <person name="Patel A.J."/>
            <person name="Thurmond S."/>
            <person name="Henry D."/>
            <person name="Oates R."/>
            <person name="Palmer M."/>
            <person name="Pries G."/>
            <person name="Gibson J."/>
            <person name="Anderson H."/>
            <person name="Paradkar M."/>
            <person name="Crane L."/>
            <person name="Dale J."/>
            <person name="Carver M.B."/>
            <person name="Wood T."/>
            <person name="Frisch D."/>
            <person name="Engler F."/>
            <person name="Soderlund C."/>
            <person name="Palmer L.E."/>
            <person name="Teytelman L."/>
            <person name="Nascimento L."/>
            <person name="De la Bastide M."/>
            <person name="Spiegel L."/>
            <person name="Ware D."/>
            <person name="O'Shaughnessy A."/>
            <person name="Dike S."/>
            <person name="Dedhia N."/>
            <person name="Preston R."/>
            <person name="Huang E."/>
            <person name="Ferraro K."/>
            <person name="Kuit K."/>
            <person name="Miller B."/>
            <person name="Zutavern T."/>
            <person name="Katzenberger F."/>
            <person name="Muller S."/>
            <person name="Balija V."/>
            <person name="Martienssen R.A."/>
            <person name="Stein L."/>
            <person name="Minx P."/>
            <person name="Johnson D."/>
            <person name="Cordum H."/>
            <person name="Mardis E."/>
            <person name="Cheng Z."/>
            <person name="Jiang J."/>
            <person name="Wilson R."/>
            <person name="McCombie W.R."/>
            <person name="Wing R.A."/>
            <person name="Yuan Q."/>
            <person name="Ouyang S."/>
            <person name="Liu J."/>
            <person name="Jones K.M."/>
            <person name="Gansberger K."/>
            <person name="Moffat K."/>
            <person name="Hill J."/>
            <person name="Tsitrin T."/>
            <person name="Overton L."/>
            <person name="Bera J."/>
            <person name="Kim M."/>
            <person name="Jin S."/>
            <person name="Tallon L."/>
            <person name="Ciecko A."/>
            <person name="Pai G."/>
            <person name="Van Aken S."/>
            <person name="Utterback T."/>
            <person name="Reidmuller S."/>
            <person name="Bormann J."/>
            <person name="Feldblyum T."/>
            <person name="Hsiao J."/>
            <person name="Zismann V."/>
            <person name="Blunt S."/>
            <person name="de Vazeille A.R."/>
            <person name="Shaffer T."/>
            <person name="Koo H."/>
            <person name="Suh B."/>
            <person name="Yang Q."/>
            <person name="Haas B."/>
            <person name="Peterson J."/>
            <person name="Pertea M."/>
            <person name="Volfovsky N."/>
            <person name="Wortman J."/>
            <person name="White O."/>
            <person name="Salzberg S.L."/>
            <person name="Fraser C.M."/>
            <person name="Buell C.R."/>
            <person name="Messing J."/>
            <person name="Song R."/>
            <person name="Fuks G."/>
            <person name="Llaca V."/>
            <person name="Kovchak S."/>
            <person name="Young S."/>
            <person name="Bowers J.E."/>
            <person name="Paterson A.H."/>
            <person name="Johns M.A."/>
            <person name="Mao L."/>
            <person name="Pan H."/>
            <person name="Dean R.A."/>
        </authorList>
    </citation>
    <scope>NUCLEOTIDE SEQUENCE [LARGE SCALE GENOMIC DNA]</scope>
    <source>
        <strain>cv. Nipponbare</strain>
    </source>
</reference>
<reference key="2">
    <citation type="journal article" date="2005" name="Nature">
        <title>The map-based sequence of the rice genome.</title>
        <authorList>
            <consortium name="International rice genome sequencing project (IRGSP)"/>
        </authorList>
    </citation>
    <scope>NUCLEOTIDE SEQUENCE [LARGE SCALE GENOMIC DNA]</scope>
    <source>
        <strain>cv. Nipponbare</strain>
    </source>
</reference>
<reference key="3">
    <citation type="journal article" date="2008" name="Nucleic Acids Res.">
        <title>The rice annotation project database (RAP-DB): 2008 update.</title>
        <authorList>
            <consortium name="The rice annotation project (RAP)"/>
        </authorList>
    </citation>
    <scope>GENOME REANNOTATION</scope>
    <source>
        <strain>cv. Nipponbare</strain>
    </source>
</reference>
<reference key="4">
    <citation type="journal article" date="2013" name="Rice">
        <title>Improvement of the Oryza sativa Nipponbare reference genome using next generation sequence and optical map data.</title>
        <authorList>
            <person name="Kawahara Y."/>
            <person name="de la Bastide M."/>
            <person name="Hamilton J.P."/>
            <person name="Kanamori H."/>
            <person name="McCombie W.R."/>
            <person name="Ouyang S."/>
            <person name="Schwartz D.C."/>
            <person name="Tanaka T."/>
            <person name="Wu J."/>
            <person name="Zhou S."/>
            <person name="Childs K.L."/>
            <person name="Davidson R.M."/>
            <person name="Lin H."/>
            <person name="Quesada-Ocampo L."/>
            <person name="Vaillancourt B."/>
            <person name="Sakai H."/>
            <person name="Lee S.S."/>
            <person name="Kim J."/>
            <person name="Numa H."/>
            <person name="Itoh T."/>
            <person name="Buell C.R."/>
            <person name="Matsumoto T."/>
        </authorList>
    </citation>
    <scope>GENOME REANNOTATION</scope>
    <source>
        <strain>cv. Nipponbare</strain>
    </source>
</reference>
<reference key="5">
    <citation type="journal article" date="2003" name="Science">
        <title>Collection, mapping, and annotation of over 28,000 cDNA clones from japonica rice.</title>
        <authorList>
            <consortium name="The rice full-length cDNA consortium"/>
        </authorList>
    </citation>
    <scope>NUCLEOTIDE SEQUENCE [LARGE SCALE MRNA]</scope>
    <source>
        <strain>cv. Nipponbare</strain>
    </source>
</reference>
<reference key="6">
    <citation type="journal article" date="2003" name="Plant Physiol.">
        <title>Three distinct rice cellulose synthase catalytic subunit genes required for cellulose synthesis in the secondary wall.</title>
        <authorList>
            <person name="Tanaka K."/>
            <person name="Murata K."/>
            <person name="Yamazaki M."/>
            <person name="Onosato K."/>
            <person name="Miyao A."/>
            <person name="Hirochika H."/>
        </authorList>
    </citation>
    <scope>FUNCTION</scope>
    <scope>DISRUPTION PHENOTYPE</scope>
    <scope>TISSUE SPECIFICITY</scope>
</reference>
<feature type="chain" id="PRO_0000319367" description="Cellulose synthase A catalytic subunit 7 [UDP-forming]">
    <location>
        <begin position="1"/>
        <end position="1063"/>
    </location>
</feature>
<feature type="topological domain" description="Cytoplasmic" evidence="3">
    <location>
        <begin position="1"/>
        <end position="213"/>
    </location>
</feature>
<feature type="transmembrane region" description="Helical" evidence="3">
    <location>
        <begin position="214"/>
        <end position="234"/>
    </location>
</feature>
<feature type="topological domain" description="Extracellular" evidence="3">
    <location>
        <begin position="235"/>
        <end position="237"/>
    </location>
</feature>
<feature type="transmembrane region" description="Helical" evidence="3">
    <location>
        <begin position="238"/>
        <end position="258"/>
    </location>
</feature>
<feature type="topological domain" description="Cytoplasmic" evidence="3">
    <location>
        <begin position="259"/>
        <end position="845"/>
    </location>
</feature>
<feature type="transmembrane region" description="Helical" evidence="3">
    <location>
        <begin position="846"/>
        <end position="866"/>
    </location>
</feature>
<feature type="topological domain" description="Extracellular" evidence="3">
    <location>
        <begin position="867"/>
        <end position="871"/>
    </location>
</feature>
<feature type="transmembrane region" description="Helical" evidence="3">
    <location>
        <begin position="872"/>
        <end position="892"/>
    </location>
</feature>
<feature type="topological domain" description="Cytoplasmic" evidence="3">
    <location>
        <begin position="893"/>
        <end position="907"/>
    </location>
</feature>
<feature type="transmembrane region" description="Helical" evidence="3">
    <location>
        <begin position="908"/>
        <end position="928"/>
    </location>
</feature>
<feature type="topological domain" description="Extracellular" evidence="3">
    <location>
        <begin position="929"/>
        <end position="959"/>
    </location>
</feature>
<feature type="transmembrane region" description="Helical" evidence="3">
    <location>
        <begin position="960"/>
        <end position="980"/>
    </location>
</feature>
<feature type="topological domain" description="Cytoplasmic" evidence="3">
    <location>
        <begin position="981"/>
        <end position="991"/>
    </location>
</feature>
<feature type="transmembrane region" description="Helical" evidence="3">
    <location>
        <begin position="992"/>
        <end position="1012"/>
    </location>
</feature>
<feature type="topological domain" description="Extracellular" evidence="3">
    <location>
        <begin position="1013"/>
        <end position="1021"/>
    </location>
</feature>
<feature type="transmembrane region" description="Helical" evidence="3">
    <location>
        <begin position="1022"/>
        <end position="1042"/>
    </location>
</feature>
<feature type="topological domain" description="Cytoplasmic" evidence="3">
    <location>
        <begin position="1043"/>
        <end position="1063"/>
    </location>
</feature>
<feature type="zinc finger region" description="RING-type; degenerate" evidence="4">
    <location>
        <begin position="18"/>
        <end position="64"/>
    </location>
</feature>
<feature type="region of interest" description="Disordered" evidence="6">
    <location>
        <begin position="116"/>
        <end position="154"/>
    </location>
</feature>
<feature type="coiled-coil region" evidence="3">
    <location>
        <begin position="387"/>
        <end position="414"/>
    </location>
</feature>
<feature type="compositionally biased region" description="Basic and acidic residues" evidence="6">
    <location>
        <begin position="141"/>
        <end position="154"/>
    </location>
</feature>
<feature type="active site" evidence="3">
    <location>
        <position position="333"/>
    </location>
</feature>
<feature type="active site" evidence="3">
    <location>
        <position position="762"/>
    </location>
</feature>
<feature type="binding site" evidence="2">
    <location>
        <position position="18"/>
    </location>
    <ligand>
        <name>Zn(2+)</name>
        <dbReference type="ChEBI" id="CHEBI:29105"/>
        <label>1</label>
    </ligand>
</feature>
<feature type="binding site" evidence="2">
    <location>
        <position position="21"/>
    </location>
    <ligand>
        <name>Zn(2+)</name>
        <dbReference type="ChEBI" id="CHEBI:29105"/>
        <label>1</label>
    </ligand>
</feature>
<feature type="binding site" evidence="2">
    <location>
        <position position="37"/>
    </location>
    <ligand>
        <name>Zn(2+)</name>
        <dbReference type="ChEBI" id="CHEBI:29105"/>
        <label>2</label>
    </ligand>
</feature>
<feature type="binding site" evidence="2">
    <location>
        <position position="40"/>
    </location>
    <ligand>
        <name>Zn(2+)</name>
        <dbReference type="ChEBI" id="CHEBI:29105"/>
        <label>2</label>
    </ligand>
</feature>
<feature type="binding site" evidence="2">
    <location>
        <position position="45"/>
    </location>
    <ligand>
        <name>Zn(2+)</name>
        <dbReference type="ChEBI" id="CHEBI:29105"/>
        <label>1</label>
    </ligand>
</feature>
<feature type="binding site" evidence="2">
    <location>
        <position position="48"/>
    </location>
    <ligand>
        <name>Zn(2+)</name>
        <dbReference type="ChEBI" id="CHEBI:29105"/>
        <label>1</label>
    </ligand>
</feature>
<feature type="binding site" evidence="2">
    <location>
        <position position="60"/>
    </location>
    <ligand>
        <name>Zn(2+)</name>
        <dbReference type="ChEBI" id="CHEBI:29105"/>
        <label>2</label>
    </ligand>
</feature>
<feature type="binding site" evidence="2">
    <location>
        <position position="63"/>
    </location>
    <ligand>
        <name>Zn(2+)</name>
        <dbReference type="ChEBI" id="CHEBI:29105"/>
        <label>2</label>
    </ligand>
</feature>
<feature type="binding site" evidence="1">
    <location>
        <position position="297"/>
    </location>
    <ligand>
        <name>UDP-alpha-D-glucose</name>
        <dbReference type="ChEBI" id="CHEBI:58885"/>
    </ligand>
</feature>
<feature type="binding site" evidence="1">
    <location>
        <position position="303"/>
    </location>
    <ligand>
        <name>UDP-alpha-D-glucose</name>
        <dbReference type="ChEBI" id="CHEBI:58885"/>
    </ligand>
</feature>
<feature type="binding site" evidence="1">
    <location>
        <position position="304"/>
    </location>
    <ligand>
        <name>UDP-alpha-D-glucose</name>
        <dbReference type="ChEBI" id="CHEBI:58885"/>
    </ligand>
</feature>
<feature type="binding site" evidence="1">
    <location>
        <position position="333"/>
    </location>
    <ligand>
        <name>UDP-alpha-D-glucose</name>
        <dbReference type="ChEBI" id="CHEBI:58885"/>
    </ligand>
</feature>
<feature type="binding site" evidence="1">
    <location>
        <position position="474"/>
    </location>
    <ligand>
        <name>UDP-alpha-D-glucose</name>
        <dbReference type="ChEBI" id="CHEBI:58885"/>
    </ligand>
</feature>
<feature type="binding site" evidence="1">
    <location>
        <position position="475"/>
    </location>
    <ligand>
        <name>Mn(2+)</name>
        <dbReference type="ChEBI" id="CHEBI:29035"/>
    </ligand>
</feature>
<feature type="binding site" evidence="1">
    <location>
        <position position="499"/>
    </location>
    <ligand>
        <name>Mn(2+)</name>
        <dbReference type="ChEBI" id="CHEBI:29035"/>
    </ligand>
</feature>
<feature type="glycosylation site" description="N-linked (GlcNAc...) asparagine" evidence="5">
    <location>
        <position position="935"/>
    </location>
</feature>
<comment type="function">
    <text evidence="2 7">Catalytic subunit of cellulose synthase terminal complexes ('rosettes'), required for beta-1,4-glucan microfibril crystallization, a major mechanism of the cell wall formation (By similarity). Involved in the secondary cell wall formation.</text>
</comment>
<comment type="catalytic activity">
    <reaction evidence="8">
        <text>[(1-&gt;4)-beta-D-glucosyl](n) + UDP-alpha-D-glucose = [(1-&gt;4)-beta-D-glucosyl](n+1) + UDP + H(+)</text>
        <dbReference type="Rhea" id="RHEA:19929"/>
        <dbReference type="Rhea" id="RHEA-COMP:10033"/>
        <dbReference type="Rhea" id="RHEA-COMP:10034"/>
        <dbReference type="ChEBI" id="CHEBI:15378"/>
        <dbReference type="ChEBI" id="CHEBI:18246"/>
        <dbReference type="ChEBI" id="CHEBI:58223"/>
        <dbReference type="ChEBI" id="CHEBI:58885"/>
        <dbReference type="EC" id="2.4.1.12"/>
    </reaction>
</comment>
<comment type="cofactor">
    <cofactor evidence="1">
        <name>Mn(2+)</name>
        <dbReference type="ChEBI" id="CHEBI:29035"/>
    </cofactor>
</comment>
<comment type="cofactor">
    <cofactor evidence="2">
        <name>Zn(2+)</name>
        <dbReference type="ChEBI" id="CHEBI:29105"/>
    </cofactor>
    <text evidence="2">Binds 2 Zn(2+) ions per subunit.</text>
</comment>
<comment type="pathway">
    <text>Glycan metabolism; plant cellulose biosynthesis.</text>
</comment>
<comment type="subcellular location">
    <subcellularLocation>
        <location evidence="8">Cell membrane</location>
        <topology evidence="8">Multi-pass membrane protein</topology>
    </subcellularLocation>
</comment>
<comment type="disruption phenotype">
    <text evidence="7">Plants develop a brittle culm (bc) phenotype with a reduction of up to 75% percent of cellulose content in culm.</text>
</comment>
<comment type="similarity">
    <text evidence="8">Belongs to the glycosyltransferase 2 family. Plant cellulose synthase subfamily.</text>
</comment>
<accession>Q9AV71</accession>
<accession>B7EKJ9</accession>
<accession>Q7XDK9</accession>
<gene>
    <name type="primary">CESA7</name>
    <name type="ordered locus">Os10g0467800</name>
    <name type="ordered locus">LOC_Os10g32980</name>
    <name type="ORF">OSJNBa0006L06.10</name>
</gene>
<organism>
    <name type="scientific">Oryza sativa subsp. japonica</name>
    <name type="common">Rice</name>
    <dbReference type="NCBI Taxonomy" id="39947"/>
    <lineage>
        <taxon>Eukaryota</taxon>
        <taxon>Viridiplantae</taxon>
        <taxon>Streptophyta</taxon>
        <taxon>Embryophyta</taxon>
        <taxon>Tracheophyta</taxon>
        <taxon>Spermatophyta</taxon>
        <taxon>Magnoliopsida</taxon>
        <taxon>Liliopsida</taxon>
        <taxon>Poales</taxon>
        <taxon>Poaceae</taxon>
        <taxon>BOP clade</taxon>
        <taxon>Oryzoideae</taxon>
        <taxon>Oryzeae</taxon>
        <taxon>Oryzinae</taxon>
        <taxon>Oryza</taxon>
        <taxon>Oryza sativa</taxon>
    </lineage>
</organism>
<keyword id="KW-1003">Cell membrane</keyword>
<keyword id="KW-0961">Cell wall biogenesis/degradation</keyword>
<keyword id="KW-0135">Cellulose biosynthesis</keyword>
<keyword id="KW-0175">Coiled coil</keyword>
<keyword id="KW-0325">Glycoprotein</keyword>
<keyword id="KW-0328">Glycosyltransferase</keyword>
<keyword id="KW-0464">Manganese</keyword>
<keyword id="KW-0472">Membrane</keyword>
<keyword id="KW-0479">Metal-binding</keyword>
<keyword id="KW-1185">Reference proteome</keyword>
<keyword id="KW-0808">Transferase</keyword>
<keyword id="KW-0812">Transmembrane</keyword>
<keyword id="KW-1133">Transmembrane helix</keyword>
<keyword id="KW-0862">Zinc</keyword>
<keyword id="KW-0863">Zinc-finger</keyword>
<proteinExistence type="evidence at transcript level"/>
<name>CESA7_ORYSJ</name>